<reference key="1">
    <citation type="journal article" date="1984" name="Proc. Natl. Acad. Sci. U.S.A.">
        <title>Sequence of the bacteriophage SP01 gene coding for transcription factor 1, a viral homologue of the bacterial type II DNA-binding proteins.</title>
        <authorList>
            <person name="Greene J.R."/>
            <person name="Brennan S.M."/>
            <person name="Andrew D.J."/>
            <person name="Thompson C.C."/>
            <person name="Richards S.H."/>
            <person name="Heinrikson R.L."/>
            <person name="Geiduschek E.P."/>
        </authorList>
    </citation>
    <scope>NUCLEOTIDE SEQUENCE [GENOMIC DNA]</scope>
    <scope>PARTIAL PROTEIN SEQUENCE</scope>
</reference>
<reference key="2">
    <citation type="journal article" date="1990" name="J. Mol. Biol.">
        <title>Effects of mutations at amino acid 61 in the arm of TF1 on its DNA-binding properties.</title>
        <authorList>
            <person name="Sayre M.H."/>
            <person name="Geiduschek E.P."/>
        </authorList>
    </citation>
    <scope>MUTAGENESIS</scope>
</reference>
<reference key="3">
    <citation type="journal article" date="1993" name="Eur. J. Biochem.">
        <title>A 1H-NMR study of the transcription factor 1 from Bacillus subtilis phage SPO1 by selective 2H-labeling. Complete assignment and structural analysis of the aromatic resonances for a 22-kDa homodimer.</title>
        <authorList>
            <person name="Reisman J.M."/>
            <person name="Hsu V.L."/>
            <person name="Jariel-Encontre I."/>
            <person name="Lecou C."/>
            <person name="Sayre M.H."/>
            <person name="Kearns D.R."/>
            <person name="Parello J."/>
        </authorList>
    </citation>
    <scope>STRUCTURE BY NMR</scope>
</reference>
<reference key="4">
    <citation type="journal article" date="1996" name="J. Mol. Biol.">
        <title>Structure of the Bacillus subtilis phage SPO1-encoded type II DNA-binding protein TF1 in solution.</title>
        <authorList>
            <person name="Jia X."/>
            <person name="Grove A."/>
            <person name="Ivancic M."/>
            <person name="Hsu V.L."/>
            <person name="Geiduschek E.P."/>
            <person name="Kearns D.R."/>
        </authorList>
    </citation>
    <scope>STRUCTURE BY NMR</scope>
</reference>
<keyword id="KW-0002">3D-structure</keyword>
<keyword id="KW-0903">Direct protein sequencing</keyword>
<keyword id="KW-0238">DNA-binding</keyword>
<keyword id="KW-0678">Repressor</keyword>
<keyword id="KW-0804">Transcription</keyword>
<keyword id="KW-0805">Transcription regulation</keyword>
<gene>
    <name type="primary">TF1</name>
</gene>
<proteinExistence type="evidence at protein level"/>
<evidence type="ECO:0000255" key="1"/>
<evidence type="ECO:0000305" key="2"/>
<evidence type="ECO:0007829" key="3">
    <source>
        <dbReference type="PDB" id="1EXE"/>
    </source>
</evidence>
<evidence type="ECO:0007829" key="4">
    <source>
        <dbReference type="PDB" id="1WTU"/>
    </source>
</evidence>
<protein>
    <recommendedName>
        <fullName>Transcription factor 1</fullName>
    </recommendedName>
</protein>
<sequence length="99" mass="10737">MNKTELIKAIAQDTELTQVSVSKMLASFEKITTETVAKGDKVQLTGFLNIKPVARQARKGFNPQTQEALEIAPSVGVSVKPGESLKKAAEGLKYEDFAK</sequence>
<feature type="chain" id="PRO_0000105082" description="Transcription factor 1">
    <location>
        <begin position="1"/>
        <end position="99"/>
    </location>
</feature>
<feature type="DNA-binding region">
    <location>
        <position position="61"/>
    </location>
</feature>
<feature type="DNA-binding region" evidence="1">
    <location>
        <begin position="93"/>
        <end position="94"/>
    </location>
</feature>
<feature type="region of interest" description="May be involved in preference for HM-URA DNA">
    <location>
        <begin position="52"/>
        <end position="77"/>
    </location>
</feature>
<feature type="region of interest" description="May be involved in preference for HM-URA DNA">
    <location>
        <begin position="90"/>
        <end position="99"/>
    </location>
</feature>
<feature type="helix" evidence="3">
    <location>
        <begin position="5"/>
        <end position="14"/>
    </location>
</feature>
<feature type="helix" evidence="3">
    <location>
        <begin position="21"/>
        <end position="38"/>
    </location>
</feature>
<feature type="turn" evidence="3">
    <location>
        <begin position="45"/>
        <end position="47"/>
    </location>
</feature>
<feature type="strand" evidence="4">
    <location>
        <begin position="49"/>
        <end position="53"/>
    </location>
</feature>
<feature type="strand" evidence="3">
    <location>
        <begin position="63"/>
        <end position="67"/>
    </location>
</feature>
<feature type="strand" evidence="4">
    <location>
        <begin position="76"/>
        <end position="80"/>
    </location>
</feature>
<feature type="helix" evidence="3">
    <location>
        <begin position="83"/>
        <end position="92"/>
    </location>
</feature>
<feature type="helix" evidence="3">
    <location>
        <begin position="94"/>
        <end position="98"/>
    </location>
</feature>
<organism>
    <name type="scientific">Bacillus phage SP01</name>
    <name type="common">Bacteriophage SP01</name>
    <dbReference type="NCBI Taxonomy" id="2884427"/>
    <lineage>
        <taxon>Viruses</taxon>
        <taxon>Duplodnaviria</taxon>
        <taxon>Heunggongvirae</taxon>
        <taxon>Uroviricota</taxon>
        <taxon>Caudoviricetes</taxon>
        <taxon>Herelleviridae</taxon>
        <taxon>Spounavirinae</taxon>
        <taxon>Okubovirus</taxon>
        <taxon>Okubovirus SPO1</taxon>
    </lineage>
</organism>
<name>TF1_BPSP1</name>
<accession>P04445</accession>
<dbReference type="EMBL" id="K02381">
    <property type="protein sequence ID" value="AAA32599.1"/>
    <property type="molecule type" value="Genomic_DNA"/>
</dbReference>
<dbReference type="PIR" id="A02693">
    <property type="entry name" value="DNBP11"/>
</dbReference>
<dbReference type="RefSeq" id="YP_002300416.1">
    <property type="nucleotide sequence ID" value="NC_011421.1"/>
</dbReference>
<dbReference type="PDB" id="1EXE">
    <property type="method" value="NMR"/>
    <property type="chains" value="A/B=1-99"/>
</dbReference>
<dbReference type="PDB" id="1WTU">
    <property type="method" value="NMR"/>
    <property type="chains" value="A/B=1-99"/>
</dbReference>
<dbReference type="PDBsum" id="1EXE"/>
<dbReference type="PDBsum" id="1WTU"/>
<dbReference type="SMR" id="P04445"/>
<dbReference type="GeneID" id="7009134"/>
<dbReference type="KEGG" id="vg:7009134"/>
<dbReference type="EvolutionaryTrace" id="P04445"/>
<dbReference type="GO" id="GO:0003677">
    <property type="term" value="F:DNA binding"/>
    <property type="evidence" value="ECO:0007669"/>
    <property type="project" value="UniProtKB-KW"/>
</dbReference>
<dbReference type="GO" id="GO:0030527">
    <property type="term" value="F:structural constituent of chromatin"/>
    <property type="evidence" value="ECO:0007669"/>
    <property type="project" value="InterPro"/>
</dbReference>
<dbReference type="CDD" id="cd14435">
    <property type="entry name" value="SPO1_TF1_like"/>
    <property type="match status" value="1"/>
</dbReference>
<dbReference type="Gene3D" id="4.10.520.10">
    <property type="entry name" value="IHF-like DNA-binding proteins"/>
    <property type="match status" value="1"/>
</dbReference>
<dbReference type="InterPro" id="IPR000119">
    <property type="entry name" value="Hist_DNA-bd"/>
</dbReference>
<dbReference type="InterPro" id="IPR020816">
    <property type="entry name" value="Histone-like_DNA-bd_CS"/>
</dbReference>
<dbReference type="InterPro" id="IPR010992">
    <property type="entry name" value="IHF-like_DNA-bd_dom_sf"/>
</dbReference>
<dbReference type="PANTHER" id="PTHR33175">
    <property type="entry name" value="DNA-BINDING PROTEIN HU"/>
    <property type="match status" value="1"/>
</dbReference>
<dbReference type="PANTHER" id="PTHR33175:SF3">
    <property type="entry name" value="DNA-BINDING PROTEIN HU-BETA"/>
    <property type="match status" value="1"/>
</dbReference>
<dbReference type="Pfam" id="PF00216">
    <property type="entry name" value="Bac_DNA_binding"/>
    <property type="match status" value="1"/>
</dbReference>
<dbReference type="PRINTS" id="PR01727">
    <property type="entry name" value="DNABINDINGHU"/>
</dbReference>
<dbReference type="SMART" id="SM00411">
    <property type="entry name" value="BHL"/>
    <property type="match status" value="1"/>
</dbReference>
<dbReference type="SUPFAM" id="SSF47729">
    <property type="entry name" value="IHF-like DNA-binding proteins"/>
    <property type="match status" value="1"/>
</dbReference>
<dbReference type="PROSITE" id="PS00045">
    <property type="entry name" value="HISTONE_LIKE"/>
    <property type="match status" value="1"/>
</dbReference>
<comment type="function">
    <text>Selectively binds to and inhibits the transcription of hydroxymethyluracil-(hmUra)-containing DNA, such as SP01 DNA, by RNA polymerase in vitro.</text>
</comment>
<comment type="subunit">
    <text>Homodimer.</text>
</comment>
<comment type="similarity">
    <text evidence="2">Belongs to the bacterial histone-like protein family.</text>
</comment>
<organismHost>
    <name type="scientific">Bacillus subtilis</name>
    <dbReference type="NCBI Taxonomy" id="1423"/>
</organismHost>